<gene>
    <name type="primary">uspB</name>
    <name type="ordered locus">SPA3447</name>
</gene>
<protein>
    <recommendedName>
        <fullName>Universal stress protein B</fullName>
    </recommendedName>
</protein>
<organism>
    <name type="scientific">Salmonella paratyphi A (strain ATCC 9150 / SARB42)</name>
    <dbReference type="NCBI Taxonomy" id="295319"/>
    <lineage>
        <taxon>Bacteria</taxon>
        <taxon>Pseudomonadati</taxon>
        <taxon>Pseudomonadota</taxon>
        <taxon>Gammaproteobacteria</taxon>
        <taxon>Enterobacterales</taxon>
        <taxon>Enterobacteriaceae</taxon>
        <taxon>Salmonella</taxon>
    </lineage>
</organism>
<sequence>MISTVSLFWALCVVCIVNMARYFSSLRALLVVLRGCDPLLYQYVDGGGFFTTHGQPNKQVRLVWYIYAQRYRDHHDEEFIRRCERVRRQFLLTSALCGLVVVSLIALMIWH</sequence>
<keyword id="KW-0997">Cell inner membrane</keyword>
<keyword id="KW-1003">Cell membrane</keyword>
<keyword id="KW-0472">Membrane</keyword>
<keyword id="KW-0812">Transmembrane</keyword>
<keyword id="KW-1133">Transmembrane helix</keyword>
<feature type="chain" id="PRO_0000212046" description="Universal stress protein B">
    <location>
        <begin position="1"/>
        <end position="111"/>
    </location>
</feature>
<feature type="transmembrane region" description="Helical" evidence="2">
    <location>
        <begin position="1"/>
        <end position="21"/>
    </location>
</feature>
<feature type="topological domain" description="Cytoplasmic" evidence="2">
    <location>
        <begin position="22"/>
        <end position="89"/>
    </location>
</feature>
<feature type="transmembrane region" description="Helical" evidence="2">
    <location>
        <begin position="90"/>
        <end position="110"/>
    </location>
</feature>
<feature type="topological domain" description="Periplasmic" evidence="2">
    <location>
        <position position="111"/>
    </location>
</feature>
<proteinExistence type="inferred from homology"/>
<comment type="subcellular location">
    <subcellularLocation>
        <location evidence="1">Cell inner membrane</location>
        <topology evidence="1">Multi-pass membrane protein</topology>
    </subcellularLocation>
</comment>
<comment type="similarity">
    <text evidence="3">Belongs to the universal stress protein B family.</text>
</comment>
<name>USPB_SALPA</name>
<reference key="1">
    <citation type="journal article" date="2004" name="Nat. Genet.">
        <title>Comparison of genome degradation in Paratyphi A and Typhi, human-restricted serovars of Salmonella enterica that cause typhoid.</title>
        <authorList>
            <person name="McClelland M."/>
            <person name="Sanderson K.E."/>
            <person name="Clifton S.W."/>
            <person name="Latreille P."/>
            <person name="Porwollik S."/>
            <person name="Sabo A."/>
            <person name="Meyer R."/>
            <person name="Bieri T."/>
            <person name="Ozersky P."/>
            <person name="McLellan M."/>
            <person name="Harkins C.R."/>
            <person name="Wang C."/>
            <person name="Nguyen C."/>
            <person name="Berghoff A."/>
            <person name="Elliott G."/>
            <person name="Kohlberg S."/>
            <person name="Strong C."/>
            <person name="Du F."/>
            <person name="Carter J."/>
            <person name="Kremizki C."/>
            <person name="Layman D."/>
            <person name="Leonard S."/>
            <person name="Sun H."/>
            <person name="Fulton L."/>
            <person name="Nash W."/>
            <person name="Miner T."/>
            <person name="Minx P."/>
            <person name="Delehaunty K."/>
            <person name="Fronick C."/>
            <person name="Magrini V."/>
            <person name="Nhan M."/>
            <person name="Warren W."/>
            <person name="Florea L."/>
            <person name="Spieth J."/>
            <person name="Wilson R.K."/>
        </authorList>
    </citation>
    <scope>NUCLEOTIDE SEQUENCE [LARGE SCALE GENOMIC DNA]</scope>
    <source>
        <strain>ATCC 9150 / SARB42</strain>
    </source>
</reference>
<accession>Q5PJP1</accession>
<evidence type="ECO:0000250" key="1"/>
<evidence type="ECO:0000255" key="2"/>
<evidence type="ECO:0000305" key="3"/>
<dbReference type="EMBL" id="CP000026">
    <property type="protein sequence ID" value="AAV79258.1"/>
    <property type="molecule type" value="Genomic_DNA"/>
</dbReference>
<dbReference type="RefSeq" id="WP_000626193.1">
    <property type="nucleotide sequence ID" value="NC_006511.1"/>
</dbReference>
<dbReference type="DNASU" id="3177844"/>
<dbReference type="GeneID" id="66757914"/>
<dbReference type="KEGG" id="spt:SPA3447"/>
<dbReference type="HOGENOM" id="CLU_151816_0_0_6"/>
<dbReference type="Proteomes" id="UP000008185">
    <property type="component" value="Chromosome"/>
</dbReference>
<dbReference type="GO" id="GO:0005886">
    <property type="term" value="C:plasma membrane"/>
    <property type="evidence" value="ECO:0007669"/>
    <property type="project" value="UniProtKB-SubCell"/>
</dbReference>
<dbReference type="HAMAP" id="MF_01088">
    <property type="entry name" value="UspB"/>
    <property type="match status" value="1"/>
</dbReference>
<dbReference type="InterPro" id="IPR019598">
    <property type="entry name" value="Universal_stress_protein_B"/>
</dbReference>
<dbReference type="NCBIfam" id="NF003435">
    <property type="entry name" value="PRK04960.1"/>
    <property type="match status" value="1"/>
</dbReference>
<dbReference type="Pfam" id="PF10625">
    <property type="entry name" value="UspB"/>
    <property type="match status" value="1"/>
</dbReference>